<feature type="chain" id="PRO_1000099008" description="NH(3)-dependent NAD(+) synthetase">
    <location>
        <begin position="1"/>
        <end position="284"/>
    </location>
</feature>
<feature type="binding site" evidence="1">
    <location>
        <begin position="51"/>
        <end position="58"/>
    </location>
    <ligand>
        <name>ATP</name>
        <dbReference type="ChEBI" id="CHEBI:30616"/>
    </ligand>
</feature>
<feature type="binding site" evidence="1">
    <location>
        <position position="57"/>
    </location>
    <ligand>
        <name>Mg(2+)</name>
        <dbReference type="ChEBI" id="CHEBI:18420"/>
    </ligand>
</feature>
<feature type="binding site" evidence="1">
    <location>
        <position position="148"/>
    </location>
    <ligand>
        <name>deamido-NAD(+)</name>
        <dbReference type="ChEBI" id="CHEBI:58437"/>
    </ligand>
</feature>
<feature type="binding site" evidence="1">
    <location>
        <position position="168"/>
    </location>
    <ligand>
        <name>ATP</name>
        <dbReference type="ChEBI" id="CHEBI:30616"/>
    </ligand>
</feature>
<feature type="binding site" evidence="1">
    <location>
        <position position="173"/>
    </location>
    <ligand>
        <name>Mg(2+)</name>
        <dbReference type="ChEBI" id="CHEBI:18420"/>
    </ligand>
</feature>
<feature type="binding site" evidence="1">
    <location>
        <position position="181"/>
    </location>
    <ligand>
        <name>deamido-NAD(+)</name>
        <dbReference type="ChEBI" id="CHEBI:58437"/>
    </ligand>
</feature>
<feature type="binding site" evidence="1">
    <location>
        <position position="188"/>
    </location>
    <ligand>
        <name>deamido-NAD(+)</name>
        <dbReference type="ChEBI" id="CHEBI:58437"/>
    </ligand>
</feature>
<feature type="binding site" evidence="1">
    <location>
        <position position="197"/>
    </location>
    <ligand>
        <name>ATP</name>
        <dbReference type="ChEBI" id="CHEBI:30616"/>
    </ligand>
</feature>
<feature type="binding site" evidence="1">
    <location>
        <position position="219"/>
    </location>
    <ligand>
        <name>ATP</name>
        <dbReference type="ChEBI" id="CHEBI:30616"/>
    </ligand>
</feature>
<feature type="binding site" evidence="1">
    <location>
        <begin position="268"/>
        <end position="269"/>
    </location>
    <ligand>
        <name>deamido-NAD(+)</name>
        <dbReference type="ChEBI" id="CHEBI:58437"/>
    </ligand>
</feature>
<keyword id="KW-0067">ATP-binding</keyword>
<keyword id="KW-0436">Ligase</keyword>
<keyword id="KW-0460">Magnesium</keyword>
<keyword id="KW-0479">Metal-binding</keyword>
<keyword id="KW-0520">NAD</keyword>
<keyword id="KW-0547">Nucleotide-binding</keyword>
<keyword id="KW-1185">Reference proteome</keyword>
<evidence type="ECO:0000255" key="1">
    <source>
        <dbReference type="HAMAP-Rule" id="MF_00193"/>
    </source>
</evidence>
<dbReference type="EC" id="6.3.1.5" evidence="1"/>
<dbReference type="EMBL" id="CP000011">
    <property type="protein sequence ID" value="AAU46930.1"/>
    <property type="molecule type" value="Genomic_DNA"/>
</dbReference>
<dbReference type="RefSeq" id="WP_004201926.1">
    <property type="nucleotide sequence ID" value="NC_006349.2"/>
</dbReference>
<dbReference type="RefSeq" id="YP_105480.1">
    <property type="nucleotide sequence ID" value="NC_006349.2"/>
</dbReference>
<dbReference type="SMR" id="Q62CU8"/>
<dbReference type="GeneID" id="92976563"/>
<dbReference type="KEGG" id="bma:BMAA0760"/>
<dbReference type="PATRIC" id="fig|243160.12.peg.4281"/>
<dbReference type="eggNOG" id="COG0171">
    <property type="taxonomic scope" value="Bacteria"/>
</dbReference>
<dbReference type="HOGENOM" id="CLU_059327_3_0_4"/>
<dbReference type="UniPathway" id="UPA00253">
    <property type="reaction ID" value="UER00333"/>
</dbReference>
<dbReference type="Proteomes" id="UP000006693">
    <property type="component" value="Chromosome 2"/>
</dbReference>
<dbReference type="GO" id="GO:0005737">
    <property type="term" value="C:cytoplasm"/>
    <property type="evidence" value="ECO:0007669"/>
    <property type="project" value="InterPro"/>
</dbReference>
<dbReference type="GO" id="GO:0005524">
    <property type="term" value="F:ATP binding"/>
    <property type="evidence" value="ECO:0007669"/>
    <property type="project" value="UniProtKB-UniRule"/>
</dbReference>
<dbReference type="GO" id="GO:0004359">
    <property type="term" value="F:glutaminase activity"/>
    <property type="evidence" value="ECO:0007669"/>
    <property type="project" value="InterPro"/>
</dbReference>
<dbReference type="GO" id="GO:0046872">
    <property type="term" value="F:metal ion binding"/>
    <property type="evidence" value="ECO:0007669"/>
    <property type="project" value="UniProtKB-KW"/>
</dbReference>
<dbReference type="GO" id="GO:0003952">
    <property type="term" value="F:NAD+ synthase (glutamine-hydrolyzing) activity"/>
    <property type="evidence" value="ECO:0007669"/>
    <property type="project" value="InterPro"/>
</dbReference>
<dbReference type="GO" id="GO:0008795">
    <property type="term" value="F:NAD+ synthase activity"/>
    <property type="evidence" value="ECO:0007669"/>
    <property type="project" value="UniProtKB-UniRule"/>
</dbReference>
<dbReference type="GO" id="GO:0009435">
    <property type="term" value="P:NAD biosynthetic process"/>
    <property type="evidence" value="ECO:0007669"/>
    <property type="project" value="UniProtKB-UniRule"/>
</dbReference>
<dbReference type="CDD" id="cd00553">
    <property type="entry name" value="NAD_synthase"/>
    <property type="match status" value="1"/>
</dbReference>
<dbReference type="Gene3D" id="3.40.50.620">
    <property type="entry name" value="HUPs"/>
    <property type="match status" value="1"/>
</dbReference>
<dbReference type="HAMAP" id="MF_00193">
    <property type="entry name" value="NadE_ammonia_dep"/>
    <property type="match status" value="1"/>
</dbReference>
<dbReference type="InterPro" id="IPR022310">
    <property type="entry name" value="NAD/GMP_synthase"/>
</dbReference>
<dbReference type="InterPro" id="IPR003694">
    <property type="entry name" value="NAD_synthase"/>
</dbReference>
<dbReference type="InterPro" id="IPR022926">
    <property type="entry name" value="NH(3)-dep_NAD(+)_synth"/>
</dbReference>
<dbReference type="InterPro" id="IPR014729">
    <property type="entry name" value="Rossmann-like_a/b/a_fold"/>
</dbReference>
<dbReference type="NCBIfam" id="TIGR00552">
    <property type="entry name" value="nadE"/>
    <property type="match status" value="1"/>
</dbReference>
<dbReference type="NCBIfam" id="NF001979">
    <property type="entry name" value="PRK00768.1"/>
    <property type="match status" value="1"/>
</dbReference>
<dbReference type="PANTHER" id="PTHR23090">
    <property type="entry name" value="NH 3 /GLUTAMINE-DEPENDENT NAD + SYNTHETASE"/>
    <property type="match status" value="1"/>
</dbReference>
<dbReference type="PANTHER" id="PTHR23090:SF7">
    <property type="entry name" value="NH(3)-DEPENDENT NAD(+) SYNTHETASE"/>
    <property type="match status" value="1"/>
</dbReference>
<dbReference type="Pfam" id="PF02540">
    <property type="entry name" value="NAD_synthase"/>
    <property type="match status" value="1"/>
</dbReference>
<dbReference type="SUPFAM" id="SSF52402">
    <property type="entry name" value="Adenine nucleotide alpha hydrolases-like"/>
    <property type="match status" value="1"/>
</dbReference>
<name>NADE_BURMA</name>
<reference key="1">
    <citation type="journal article" date="2004" name="Proc. Natl. Acad. Sci. U.S.A.">
        <title>Structural flexibility in the Burkholderia mallei genome.</title>
        <authorList>
            <person name="Nierman W.C."/>
            <person name="DeShazer D."/>
            <person name="Kim H.S."/>
            <person name="Tettelin H."/>
            <person name="Nelson K.E."/>
            <person name="Feldblyum T.V."/>
            <person name="Ulrich R.L."/>
            <person name="Ronning C.M."/>
            <person name="Brinkac L.M."/>
            <person name="Daugherty S.C."/>
            <person name="Davidsen T.D."/>
            <person name="DeBoy R.T."/>
            <person name="Dimitrov G."/>
            <person name="Dodson R.J."/>
            <person name="Durkin A.S."/>
            <person name="Gwinn M.L."/>
            <person name="Haft D.H."/>
            <person name="Khouri H.M."/>
            <person name="Kolonay J.F."/>
            <person name="Madupu R."/>
            <person name="Mohammoud Y."/>
            <person name="Nelson W.C."/>
            <person name="Radune D."/>
            <person name="Romero C.M."/>
            <person name="Sarria S."/>
            <person name="Selengut J."/>
            <person name="Shamblin C."/>
            <person name="Sullivan S.A."/>
            <person name="White O."/>
            <person name="Yu Y."/>
            <person name="Zafar N."/>
            <person name="Zhou L."/>
            <person name="Fraser C.M."/>
        </authorList>
    </citation>
    <scope>NUCLEOTIDE SEQUENCE [LARGE SCALE GENOMIC DNA]</scope>
    <source>
        <strain>ATCC 23344</strain>
    </source>
</reference>
<gene>
    <name evidence="1" type="primary">nadE</name>
    <name type="ordered locus">BMAA0760</name>
</gene>
<sequence length="284" mass="30863">MSRPDQAARRRAIAAELHVSPTFDARDEAERRIGFVADYLRTAGLRACVLGISGGIDSSTAGRLAQLAVERLRASGYDARFVAMRLPYGAQHDEADARRALAFVRADETLTVDVKPAADAMLAALAAGGLAYLDHAQQDFVLGNIKARERMIAQYAVAGARNGVVIGTDHAAESVMGFFTKFGDGGADVLPLAGLTKRRVRALARMLGADEPLVLKTPTADLETLRPQRPDEHAYGITYEQIDDFLEGKPMDDAVAETVLRFYDATHHKRALPYTMFDWPGHPA</sequence>
<accession>Q62CU8</accession>
<comment type="function">
    <text evidence="1">Catalyzes the ATP-dependent amidation of deamido-NAD to form NAD. Uses ammonia as a nitrogen source.</text>
</comment>
<comment type="catalytic activity">
    <reaction evidence="1">
        <text>deamido-NAD(+) + NH4(+) + ATP = AMP + diphosphate + NAD(+) + H(+)</text>
        <dbReference type="Rhea" id="RHEA:21188"/>
        <dbReference type="ChEBI" id="CHEBI:15378"/>
        <dbReference type="ChEBI" id="CHEBI:28938"/>
        <dbReference type="ChEBI" id="CHEBI:30616"/>
        <dbReference type="ChEBI" id="CHEBI:33019"/>
        <dbReference type="ChEBI" id="CHEBI:57540"/>
        <dbReference type="ChEBI" id="CHEBI:58437"/>
        <dbReference type="ChEBI" id="CHEBI:456215"/>
        <dbReference type="EC" id="6.3.1.5"/>
    </reaction>
</comment>
<comment type="pathway">
    <text evidence="1">Cofactor biosynthesis; NAD(+) biosynthesis; NAD(+) from deamido-NAD(+) (ammonia route): step 1/1.</text>
</comment>
<comment type="subunit">
    <text evidence="1">Homodimer.</text>
</comment>
<comment type="similarity">
    <text evidence="1">Belongs to the NAD synthetase family.</text>
</comment>
<organism>
    <name type="scientific">Burkholderia mallei (strain ATCC 23344)</name>
    <dbReference type="NCBI Taxonomy" id="243160"/>
    <lineage>
        <taxon>Bacteria</taxon>
        <taxon>Pseudomonadati</taxon>
        <taxon>Pseudomonadota</taxon>
        <taxon>Betaproteobacteria</taxon>
        <taxon>Burkholderiales</taxon>
        <taxon>Burkholderiaceae</taxon>
        <taxon>Burkholderia</taxon>
        <taxon>pseudomallei group</taxon>
    </lineage>
</organism>
<protein>
    <recommendedName>
        <fullName evidence="1">NH(3)-dependent NAD(+) synthetase</fullName>
        <ecNumber evidence="1">6.3.1.5</ecNumber>
    </recommendedName>
</protein>
<proteinExistence type="inferred from homology"/>